<proteinExistence type="evidence at protein level"/>
<evidence type="ECO:0000255" key="1">
    <source>
        <dbReference type="PROSITE-ProRule" id="PRU00625"/>
    </source>
</evidence>
<evidence type="ECO:0000256" key="2">
    <source>
        <dbReference type="SAM" id="MobiDB-lite"/>
    </source>
</evidence>
<evidence type="ECO:0000269" key="3">
    <source>
    </source>
</evidence>
<evidence type="ECO:0000269" key="4">
    <source>
    </source>
</evidence>
<evidence type="ECO:0000269" key="5">
    <source>
    </source>
</evidence>
<evidence type="ECO:0000269" key="6">
    <source>
    </source>
</evidence>
<evidence type="ECO:0000269" key="7">
    <source>
    </source>
</evidence>
<evidence type="ECO:0000303" key="8">
    <source>
    </source>
</evidence>
<evidence type="ECO:0000305" key="9"/>
<evidence type="ECO:0000312" key="10">
    <source>
        <dbReference type="Araport" id="AT5G57620"/>
    </source>
</evidence>
<evidence type="ECO:0000312" key="11">
    <source>
        <dbReference type="EMBL" id="BAB08797.1"/>
    </source>
</evidence>
<comment type="function">
    <text evidence="5 6">Transcription factors that activates genes required for endodermal differentiation but represses genes involved in proliferative divisions, thus regulating the transition from proliferation to differentiation in root endodermis (PubMed:26371322). Required for Casparian strip formation by positively regulating the expression of the Casparian strip genes CASP1, PER64 and ESB1 and other endodermis-specific genes, thus triggering correct localized lignin biosynthesis in root endodermis and subsequently regulating global ion homeostasis (PubMed:26124109, PubMed:26371322).</text>
</comment>
<comment type="subcellular location">
    <subcellularLocation>
        <location evidence="1">Nucleus</location>
    </subcellularLocation>
</comment>
<comment type="tissue specificity">
    <text evidence="3 5 6 7">Expressed in leaves, roots (endodermis-specific) and seedlings.</text>
</comment>
<comment type="developmental stage">
    <text evidence="5 6">In roots, expressed in endodermal cells from the late elongation zones to the differentiation zone and, to a lower extent, in endodermal cells of the meristematic zone.</text>
</comment>
<comment type="induction">
    <text evidence="4 6">Directly up-regulated by SCARECROW (SCR), as part of the differentiation program controlled by SHORT-ROOT (SHR).</text>
</comment>
<comment type="disruption phenotype">
    <text evidence="5 6">In myb36-1, myb36-2 and myb36-4, impaired Casparian strips formation replaced by ectopic lignin-like material in the corners of endodermal cells, associated with reduced expression of several endodermis-specific genes and abnormal CASP1 localization in the plasma membrane (PubMed:26124109, PubMed:26371322). Multiple changes to leaf ionome, including elevated concentrations of sodium, magnesium, and zinc and decreased calcium, manganese, and iron. Longer root hairs (PubMed:26124109). Delayed and defective barrier (Casparian strips) formation as well as extra cell divisions in the meristem in roots (PubMed:26371322).</text>
</comment>
<accession>Q9FKL2</accession>
<accession>Q9ZTE6</accession>
<sequence>MGRAPCCDKANVKKGPWSPEEDVKLKDYIDKYGTGGNWIALPQKIGLKRCGKSCRLRWLNYLRPNIKHGGFSEEEDRIILSLYISIGSRWSIIAAQLPGRTDNDIKNYWNTKLKKKLLGRQKQMNRQDSITDSTENNLSNNNNNKSPQNLSNSALERLQLHMQLQNLQSPFSSFYNNPILWPKLHPLLQSTTTNQNPKLASQESFHPLGVNVDHQHNNTKLAQINNGASSLYSENVEQSQNPAHEFQPNFGFSQDLRLDNHNMDFMNRGVSKELFQVGNEFELTNGSSWWSEEVELERKTTSSSSWGSASVLDQTTEGMVMLQDYAQMSYHSV</sequence>
<gene>
    <name evidence="8" type="primary">MYB36</name>
    <name evidence="10" type="ordered locus">At5g57620</name>
    <name evidence="11" type="ORF">MUA2.20</name>
</gene>
<protein>
    <recommendedName>
        <fullName evidence="8">Transcription factor MYB36</fullName>
    </recommendedName>
    <alternativeName>
        <fullName evidence="8">Myb-related protein 36</fullName>
        <shortName evidence="8">AtMYB36</shortName>
    </alternativeName>
</protein>
<reference key="1">
    <citation type="journal article" date="1998" name="Plant J.">
        <title>Towards functional characterisation of the members of the R2R3-MYB gene family from Arabidopsis thaliana.</title>
        <authorList>
            <person name="Kranz H.D."/>
            <person name="Denekamp M."/>
            <person name="Greco R."/>
            <person name="Jin H.-L."/>
            <person name="Leyva A."/>
            <person name="Meissner R.C."/>
            <person name="Petroni K."/>
            <person name="Urzainqui A."/>
            <person name="Bevan M."/>
            <person name="Martin C."/>
            <person name="Smeekens S."/>
            <person name="Tonelli C."/>
            <person name="Paz-Ares J."/>
            <person name="Weisshaar B."/>
        </authorList>
    </citation>
    <scope>NUCLEOTIDE SEQUENCE [MRNA]</scope>
    <scope>TISSUE SPECIFICITY</scope>
    <scope>GENE FAMILY</scope>
    <scope>NOMENCLATURE</scope>
    <source>
        <strain>cv. Columbia</strain>
    </source>
</reference>
<reference key="2">
    <citation type="submission" date="2004-01" db="EMBL/GenBank/DDBJ databases">
        <title>The MYB transcription factor family in Arabidopsis: A genome-wide cloning and expression pattern analysis.</title>
        <authorList>
            <person name="Qu L."/>
            <person name="Gu H."/>
        </authorList>
    </citation>
    <scope>NUCLEOTIDE SEQUENCE [MRNA]</scope>
</reference>
<reference key="3">
    <citation type="journal article" date="1998" name="DNA Res.">
        <title>Structural analysis of Arabidopsis thaliana chromosome 5. V. Sequence features of the regions of 1,381,565 bp covered by twenty one physically assigned P1 and TAC clones.</title>
        <authorList>
            <person name="Kaneko T."/>
            <person name="Kotani H."/>
            <person name="Nakamura Y."/>
            <person name="Sato S."/>
            <person name="Asamizu E."/>
            <person name="Miyajima N."/>
            <person name="Tabata S."/>
        </authorList>
    </citation>
    <scope>NUCLEOTIDE SEQUENCE [LARGE SCALE GENOMIC DNA]</scope>
    <source>
        <strain>cv. Columbia</strain>
    </source>
</reference>
<reference key="4">
    <citation type="journal article" date="2017" name="Plant J.">
        <title>Araport11: a complete reannotation of the Arabidopsis thaliana reference genome.</title>
        <authorList>
            <person name="Cheng C.Y."/>
            <person name="Krishnakumar V."/>
            <person name="Chan A.P."/>
            <person name="Thibaud-Nissen F."/>
            <person name="Schobel S."/>
            <person name="Town C.D."/>
        </authorList>
    </citation>
    <scope>GENOME REANNOTATION</scope>
    <source>
        <strain>cv. Columbia</strain>
    </source>
</reference>
<reference key="5">
    <citation type="submission" date="2006-07" db="EMBL/GenBank/DDBJ databases">
        <title>Large-scale analysis of RIKEN Arabidopsis full-length (RAFL) cDNAs.</title>
        <authorList>
            <person name="Totoki Y."/>
            <person name="Seki M."/>
            <person name="Ishida J."/>
            <person name="Nakajima M."/>
            <person name="Enju A."/>
            <person name="Kamiya A."/>
            <person name="Narusaka M."/>
            <person name="Shin-i T."/>
            <person name="Nakagawa M."/>
            <person name="Sakamoto N."/>
            <person name="Oishi K."/>
            <person name="Kohara Y."/>
            <person name="Kobayashi M."/>
            <person name="Toyoda A."/>
            <person name="Sakaki Y."/>
            <person name="Sakurai T."/>
            <person name="Iida K."/>
            <person name="Akiyama K."/>
            <person name="Satou M."/>
            <person name="Toyoda T."/>
            <person name="Konagaya A."/>
            <person name="Carninci P."/>
            <person name="Kawai J."/>
            <person name="Hayashizaki Y."/>
            <person name="Shinozaki K."/>
        </authorList>
    </citation>
    <scope>NUCLEOTIDE SEQUENCE [LARGE SCALE MRNA]</scope>
    <source>
        <strain>cv. Columbia</strain>
    </source>
</reference>
<reference key="6">
    <citation type="submission" date="2007-02" db="EMBL/GenBank/DDBJ databases">
        <title>Arabidopsis ORF clones.</title>
        <authorList>
            <person name="Bautista V.R."/>
            <person name="Kim C.J."/>
            <person name="Chen H."/>
            <person name="Wu S.Y."/>
            <person name="De Los Reyes C."/>
            <person name="Ecker J.R."/>
        </authorList>
    </citation>
    <scope>NUCLEOTIDE SEQUENCE [LARGE SCALE MRNA]</scope>
    <source>
        <strain>cv. Columbia</strain>
    </source>
</reference>
<reference key="7">
    <citation type="journal article" date="2001" name="Curr. Opin. Plant Biol.">
        <title>The R2R3-MYB gene family in Arabidopsis thaliana.</title>
        <authorList>
            <person name="Stracke R."/>
            <person name="Werber M."/>
            <person name="Weisshaar B."/>
        </authorList>
    </citation>
    <scope>GENE FAMILY</scope>
</reference>
<reference key="8">
    <citation type="journal article" date="2006" name="Plant Cell">
        <title>Blind homologous R2R3 Myb genes control the pattern of lateral meristem initiation in Arabidopsis.</title>
        <authorList>
            <person name="Mueller D."/>
            <person name="Schmitz G."/>
            <person name="Theres K."/>
        </authorList>
    </citation>
    <scope>TISSUE SPECIFICITY</scope>
    <scope>GENE FAMILY</scope>
</reference>
<reference key="9">
    <citation type="journal article" date="2006" name="Plant Mol. Biol.">
        <title>The MYB transcription factor superfamily of Arabidopsis: expression analysis and phylogenetic comparison with the rice MYB family.</title>
        <authorList>
            <person name="Chen Y."/>
            <person name="Yang X."/>
            <person name="He K."/>
            <person name="Liu M."/>
            <person name="Li J."/>
            <person name="Gao Z."/>
            <person name="Lin Z."/>
            <person name="Zhang Y."/>
            <person name="Wang X."/>
            <person name="Qiu X."/>
            <person name="Shen Y."/>
            <person name="Zhang L."/>
            <person name="Deng X."/>
            <person name="Luo J."/>
            <person name="Deng X.-W."/>
            <person name="Chen Z."/>
            <person name="Gu H."/>
            <person name="Qu L.-J."/>
        </authorList>
    </citation>
    <scope>GENE FAMILY</scope>
</reference>
<reference key="10">
    <citation type="journal article" date="2014" name="Plant J.">
        <title>SCARECROW, SCR-LIKE 23 and SHORT-ROOT control bundle sheath cell fate and function in Arabidopsis thaliana.</title>
        <authorList>
            <person name="Cui H."/>
            <person name="Kong D."/>
            <person name="Liu X."/>
            <person name="Hao Y."/>
        </authorList>
    </citation>
    <scope>INDUCTION BY SCR</scope>
</reference>
<reference key="11">
    <citation type="journal article" date="2015" name="Proc. Natl. Acad. Sci. U.S.A.">
        <title>The MYB36 transcription factor orchestrates Casparian strip formation.</title>
        <authorList>
            <person name="Kamiya T."/>
            <person name="Borghi M."/>
            <person name="Wang P."/>
            <person name="Danku J.M.C."/>
            <person name="Kalmbach L."/>
            <person name="Hosmani P.S."/>
            <person name="Naseer S."/>
            <person name="Fujiwara T."/>
            <person name="Geldner N."/>
            <person name="Salt D.E."/>
        </authorList>
    </citation>
    <scope>FUNCTION</scope>
    <scope>DISRUPTION PHENOTYPE</scope>
    <scope>MUTAGENESIS OF ARG-89</scope>
    <scope>TISSUE SPECIFICITY</scope>
    <scope>DEVELOPMENTAL STAGE</scope>
    <source>
        <strain>cv. Columbia</strain>
    </source>
</reference>
<reference key="12">
    <citation type="journal article" date="2015" name="Proc. Natl. Acad. Sci. U.S.A.">
        <title>MYB36 regulates the transition from proliferation to differentiation in the Arabidopsis root.</title>
        <authorList>
            <person name="Liberman L.M."/>
            <person name="Sparks E.E."/>
            <person name="Moreno-Risueno M.A."/>
            <person name="Petricka J.J."/>
            <person name="Benfey P.N."/>
        </authorList>
    </citation>
    <scope>FUNCTION</scope>
    <scope>DISRUPTION PHENOTYPE</scope>
    <scope>INDUCTION BY SCR</scope>
    <scope>DEVELOPMENTAL STAGE</scope>
    <source>
        <strain>cv. Columbia</strain>
    </source>
</reference>
<feature type="chain" id="PRO_0000435475" description="Transcription factor MYB36">
    <location>
        <begin position="1"/>
        <end position="333"/>
    </location>
</feature>
<feature type="domain" description="HTH myb-type 1" evidence="1">
    <location>
        <begin position="9"/>
        <end position="62"/>
    </location>
</feature>
<feature type="domain" description="HTH myb-type 2" evidence="1">
    <location>
        <begin position="63"/>
        <end position="117"/>
    </location>
</feature>
<feature type="DNA-binding region" description="H-T-H motif" evidence="1">
    <location>
        <begin position="38"/>
        <end position="62"/>
    </location>
</feature>
<feature type="DNA-binding region" description="H-T-H motif" evidence="1">
    <location>
        <begin position="90"/>
        <end position="113"/>
    </location>
</feature>
<feature type="region of interest" description="Disordered" evidence="2">
    <location>
        <begin position="119"/>
        <end position="150"/>
    </location>
</feature>
<feature type="compositionally biased region" description="Polar residues" evidence="2">
    <location>
        <begin position="122"/>
        <end position="135"/>
    </location>
</feature>
<feature type="compositionally biased region" description="Low complexity" evidence="2">
    <location>
        <begin position="136"/>
        <end position="150"/>
    </location>
</feature>
<feature type="mutagenesis site" description="In myb36-3; impaired accumulation of CASP1 in Casparian strips and longer root hairs." evidence="5">
    <original>R</original>
    <variation>W</variation>
    <location>
        <position position="89"/>
    </location>
</feature>
<feature type="sequence conflict" description="In Ref. 1; AAC83600." evidence="9" ref="1">
    <original>R</original>
    <variation>K</variation>
    <location>
        <position position="157"/>
    </location>
</feature>
<keyword id="KW-0010">Activator</keyword>
<keyword id="KW-0238">DNA-binding</keyword>
<keyword id="KW-0539">Nucleus</keyword>
<keyword id="KW-1185">Reference proteome</keyword>
<keyword id="KW-0677">Repeat</keyword>
<keyword id="KW-0678">Repressor</keyword>
<keyword id="KW-0804">Transcription</keyword>
<keyword id="KW-0805">Transcription regulation</keyword>
<dbReference type="EMBL" id="AF062878">
    <property type="protein sequence ID" value="AAC83600.1"/>
    <property type="molecule type" value="mRNA"/>
</dbReference>
<dbReference type="EMBL" id="AY519640">
    <property type="protein sequence ID" value="AAS10110.1"/>
    <property type="molecule type" value="mRNA"/>
</dbReference>
<dbReference type="EMBL" id="AB011482">
    <property type="protein sequence ID" value="BAB08797.1"/>
    <property type="molecule type" value="Genomic_DNA"/>
</dbReference>
<dbReference type="EMBL" id="CP002688">
    <property type="protein sequence ID" value="AED96926.1"/>
    <property type="molecule type" value="Genomic_DNA"/>
</dbReference>
<dbReference type="EMBL" id="AK228818">
    <property type="protein sequence ID" value="BAF00714.1"/>
    <property type="molecule type" value="mRNA"/>
</dbReference>
<dbReference type="EMBL" id="BT030331">
    <property type="protein sequence ID" value="ABO09894.1"/>
    <property type="molecule type" value="mRNA"/>
</dbReference>
<dbReference type="PIR" id="T51650">
    <property type="entry name" value="T51650"/>
</dbReference>
<dbReference type="RefSeq" id="NP_200570.1">
    <property type="nucleotide sequence ID" value="NM_125143.4"/>
</dbReference>
<dbReference type="SMR" id="Q9FKL2"/>
<dbReference type="FunCoup" id="Q9FKL2">
    <property type="interactions" value="18"/>
</dbReference>
<dbReference type="IntAct" id="Q9FKL2">
    <property type="interactions" value="1"/>
</dbReference>
<dbReference type="STRING" id="3702.Q9FKL2"/>
<dbReference type="PaxDb" id="3702-AT5G57620.1"/>
<dbReference type="ProteomicsDB" id="251386"/>
<dbReference type="EnsemblPlants" id="AT5G57620.1">
    <property type="protein sequence ID" value="AT5G57620.1"/>
    <property type="gene ID" value="AT5G57620"/>
</dbReference>
<dbReference type="GeneID" id="835866"/>
<dbReference type="Gramene" id="AT5G57620.1">
    <property type="protein sequence ID" value="AT5G57620.1"/>
    <property type="gene ID" value="AT5G57620"/>
</dbReference>
<dbReference type="KEGG" id="ath:AT5G57620"/>
<dbReference type="Araport" id="AT5G57620"/>
<dbReference type="TAIR" id="AT5G57620">
    <property type="gene designation" value="MYB36"/>
</dbReference>
<dbReference type="eggNOG" id="KOG0048">
    <property type="taxonomic scope" value="Eukaryota"/>
</dbReference>
<dbReference type="HOGENOM" id="CLU_028567_6_2_1"/>
<dbReference type="InParanoid" id="Q9FKL2"/>
<dbReference type="OMA" id="NPAHEFQ"/>
<dbReference type="PhylomeDB" id="Q9FKL2"/>
<dbReference type="PRO" id="PR:Q9FKL2"/>
<dbReference type="Proteomes" id="UP000006548">
    <property type="component" value="Chromosome 5"/>
</dbReference>
<dbReference type="ExpressionAtlas" id="Q9FKL2">
    <property type="expression patterns" value="baseline and differential"/>
</dbReference>
<dbReference type="GO" id="GO:0048226">
    <property type="term" value="C:Casparian strip"/>
    <property type="evidence" value="ECO:0000314"/>
    <property type="project" value="TAIR"/>
</dbReference>
<dbReference type="GO" id="GO:0005634">
    <property type="term" value="C:nucleus"/>
    <property type="evidence" value="ECO:0007669"/>
    <property type="project" value="UniProtKB-SubCell"/>
</dbReference>
<dbReference type="GO" id="GO:0003700">
    <property type="term" value="F:DNA-binding transcription factor activity"/>
    <property type="evidence" value="ECO:0000353"/>
    <property type="project" value="TAIR"/>
</dbReference>
<dbReference type="GO" id="GO:0000976">
    <property type="term" value="F:transcription cis-regulatory region binding"/>
    <property type="evidence" value="ECO:0000314"/>
    <property type="project" value="TAIR"/>
</dbReference>
<dbReference type="GO" id="GO:0030154">
    <property type="term" value="P:cell differentiation"/>
    <property type="evidence" value="ECO:0000315"/>
    <property type="project" value="TAIR"/>
</dbReference>
<dbReference type="GO" id="GO:0035987">
    <property type="term" value="P:endodermal cell differentiation"/>
    <property type="evidence" value="ECO:0000315"/>
    <property type="project" value="UniProtKB"/>
</dbReference>
<dbReference type="GO" id="GO:0050801">
    <property type="term" value="P:monoatomic ion homeostasis"/>
    <property type="evidence" value="ECO:0000315"/>
    <property type="project" value="UniProtKB"/>
</dbReference>
<dbReference type="GO" id="GO:0008285">
    <property type="term" value="P:negative regulation of cell population proliferation"/>
    <property type="evidence" value="ECO:0000314"/>
    <property type="project" value="UniProtKB"/>
</dbReference>
<dbReference type="GO" id="GO:0045892">
    <property type="term" value="P:negative regulation of DNA-templated transcription"/>
    <property type="evidence" value="ECO:0000314"/>
    <property type="project" value="UniProtKB"/>
</dbReference>
<dbReference type="GO" id="GO:0045597">
    <property type="term" value="P:positive regulation of cell differentiation"/>
    <property type="evidence" value="ECO:0000314"/>
    <property type="project" value="UniProtKB"/>
</dbReference>
<dbReference type="GO" id="GO:0045893">
    <property type="term" value="P:positive regulation of DNA-templated transcription"/>
    <property type="evidence" value="ECO:0000314"/>
    <property type="project" value="UniProtKB"/>
</dbReference>
<dbReference type="GO" id="GO:2000067">
    <property type="term" value="P:regulation of root morphogenesis"/>
    <property type="evidence" value="ECO:0000315"/>
    <property type="project" value="UniProtKB"/>
</dbReference>
<dbReference type="CDD" id="cd00167">
    <property type="entry name" value="SANT"/>
    <property type="match status" value="2"/>
</dbReference>
<dbReference type="FunFam" id="1.10.10.60:FF:000222">
    <property type="entry name" value="Transcription factor MYB36"/>
    <property type="match status" value="1"/>
</dbReference>
<dbReference type="FunFam" id="1.10.10.60:FF:000015">
    <property type="entry name" value="Transcription factor RAX3"/>
    <property type="match status" value="1"/>
</dbReference>
<dbReference type="Gene3D" id="1.10.10.60">
    <property type="entry name" value="Homeodomain-like"/>
    <property type="match status" value="2"/>
</dbReference>
<dbReference type="InterPro" id="IPR009057">
    <property type="entry name" value="Homeodomain-like_sf"/>
</dbReference>
<dbReference type="InterPro" id="IPR017930">
    <property type="entry name" value="Myb_dom"/>
</dbReference>
<dbReference type="InterPro" id="IPR001005">
    <property type="entry name" value="SANT/Myb"/>
</dbReference>
<dbReference type="PANTHER" id="PTHR48000">
    <property type="entry name" value="OS09G0431300 PROTEIN"/>
    <property type="match status" value="1"/>
</dbReference>
<dbReference type="PANTHER" id="PTHR48000:SF46">
    <property type="entry name" value="TRANSCRIPTION FACTOR MYB36"/>
    <property type="match status" value="1"/>
</dbReference>
<dbReference type="Pfam" id="PF00249">
    <property type="entry name" value="Myb_DNA-binding"/>
    <property type="match status" value="2"/>
</dbReference>
<dbReference type="SMART" id="SM00717">
    <property type="entry name" value="SANT"/>
    <property type="match status" value="2"/>
</dbReference>
<dbReference type="SUPFAM" id="SSF46689">
    <property type="entry name" value="Homeodomain-like"/>
    <property type="match status" value="1"/>
</dbReference>
<dbReference type="PROSITE" id="PS51294">
    <property type="entry name" value="HTH_MYB"/>
    <property type="match status" value="2"/>
</dbReference>
<organism>
    <name type="scientific">Arabidopsis thaliana</name>
    <name type="common">Mouse-ear cress</name>
    <dbReference type="NCBI Taxonomy" id="3702"/>
    <lineage>
        <taxon>Eukaryota</taxon>
        <taxon>Viridiplantae</taxon>
        <taxon>Streptophyta</taxon>
        <taxon>Embryophyta</taxon>
        <taxon>Tracheophyta</taxon>
        <taxon>Spermatophyta</taxon>
        <taxon>Magnoliopsida</taxon>
        <taxon>eudicotyledons</taxon>
        <taxon>Gunneridae</taxon>
        <taxon>Pentapetalae</taxon>
        <taxon>rosids</taxon>
        <taxon>malvids</taxon>
        <taxon>Brassicales</taxon>
        <taxon>Brassicaceae</taxon>
        <taxon>Camelineae</taxon>
        <taxon>Arabidopsis</taxon>
    </lineage>
</organism>
<name>MYB36_ARATH</name>